<gene>
    <name evidence="1" type="primary">panB</name>
    <name type="ordered locus">Smar_1381</name>
</gene>
<protein>
    <recommendedName>
        <fullName evidence="1">3-methyl-2-oxobutanoate hydroxymethyltransferase</fullName>
        <ecNumber evidence="1">2.1.2.11</ecNumber>
    </recommendedName>
    <alternativeName>
        <fullName evidence="1">Ketopantoate hydroxymethyltransferase</fullName>
        <shortName evidence="1">KPHMT</shortName>
    </alternativeName>
</protein>
<reference key="1">
    <citation type="journal article" date="2009" name="BMC Genomics">
        <title>The complete genome sequence of Staphylothermus marinus reveals differences in sulfur metabolism among heterotrophic Crenarchaeota.</title>
        <authorList>
            <person name="Anderson I.J."/>
            <person name="Dharmarajan L."/>
            <person name="Rodriguez J."/>
            <person name="Hooper S."/>
            <person name="Porat I."/>
            <person name="Ulrich L.E."/>
            <person name="Elkins J.G."/>
            <person name="Mavromatis K."/>
            <person name="Sun H."/>
            <person name="Land M."/>
            <person name="Lapidus A."/>
            <person name="Lucas S."/>
            <person name="Barry K."/>
            <person name="Huber H."/>
            <person name="Zhulin I.B."/>
            <person name="Whitman W.B."/>
            <person name="Mukhopadhyay B."/>
            <person name="Woese C."/>
            <person name="Bristow J."/>
            <person name="Kyrpides N."/>
        </authorList>
    </citation>
    <scope>NUCLEOTIDE SEQUENCE [LARGE SCALE GENOMIC DNA]</scope>
    <source>
        <strain>ATCC 43588 / DSM 3639 / JCM 9404 / F1</strain>
    </source>
</reference>
<reference key="2">
    <citation type="journal article" date="2009" name="Stand. Genomic Sci.">
        <title>Complete genome sequence of Staphylothermus marinus Stetter and Fiala 1986 type strain F1.</title>
        <authorList>
            <person name="Anderson I.J."/>
            <person name="Sun H."/>
            <person name="Lapidus A."/>
            <person name="Copeland A."/>
            <person name="Glavina Del Rio T."/>
            <person name="Tice H."/>
            <person name="Dalin E."/>
            <person name="Lucas S."/>
            <person name="Barry K."/>
            <person name="Land M."/>
            <person name="Richardson P."/>
            <person name="Huber H."/>
            <person name="Kyrpides N.C."/>
        </authorList>
    </citation>
    <scope>NUCLEOTIDE SEQUENCE [LARGE SCALE GENOMIC DNA]</scope>
    <source>
        <strain>ATCC 43588 / DSM 3639 / JCM 9404 / F1</strain>
    </source>
</reference>
<organism>
    <name type="scientific">Staphylothermus marinus (strain ATCC 43588 / DSM 3639 / JCM 9404 / F1)</name>
    <dbReference type="NCBI Taxonomy" id="399550"/>
    <lineage>
        <taxon>Archaea</taxon>
        <taxon>Thermoproteota</taxon>
        <taxon>Thermoprotei</taxon>
        <taxon>Desulfurococcales</taxon>
        <taxon>Desulfurococcaceae</taxon>
        <taxon>Staphylothermus</taxon>
    </lineage>
</organism>
<comment type="function">
    <text evidence="1">Catalyzes the reversible reaction in which hydroxymethyl group from 5,10-methylenetetrahydrofolate is transferred onto alpha-ketoisovalerate to form ketopantoate.</text>
</comment>
<comment type="catalytic activity">
    <reaction evidence="1">
        <text>3-methyl-2-oxobutanoate + (6R)-5,10-methylene-5,6,7,8-tetrahydrofolate + H2O = 2-dehydropantoate + (6S)-5,6,7,8-tetrahydrofolate</text>
        <dbReference type="Rhea" id="RHEA:11824"/>
        <dbReference type="ChEBI" id="CHEBI:11561"/>
        <dbReference type="ChEBI" id="CHEBI:11851"/>
        <dbReference type="ChEBI" id="CHEBI:15377"/>
        <dbReference type="ChEBI" id="CHEBI:15636"/>
        <dbReference type="ChEBI" id="CHEBI:57453"/>
        <dbReference type="EC" id="2.1.2.11"/>
    </reaction>
</comment>
<comment type="cofactor">
    <cofactor evidence="1">
        <name>Mg(2+)</name>
        <dbReference type="ChEBI" id="CHEBI:18420"/>
    </cofactor>
    <text evidence="1">Binds 1 Mg(2+) ion per subunit.</text>
</comment>
<comment type="pathway">
    <text evidence="1">Cofactor biosynthesis; coenzyme A biosynthesis.</text>
</comment>
<comment type="subunit">
    <text evidence="1">Homodecamer; pentamer of dimers.</text>
</comment>
<comment type="subcellular location">
    <subcellularLocation>
        <location evidence="1">Cytoplasm</location>
    </subcellularLocation>
</comment>
<comment type="similarity">
    <text evidence="1">Belongs to the PanB family.</text>
</comment>
<accession>A3DPB2</accession>
<evidence type="ECO:0000255" key="1">
    <source>
        <dbReference type="HAMAP-Rule" id="MF_00156"/>
    </source>
</evidence>
<proteinExistence type="inferred from homology"/>
<name>PANB_STAMF</name>
<sequence>MKKITIRDILKMKGKKKIVMVTAYDYPFAKLVDEAGVDIILVGDSAGMVVHGLPSTIPVTMDMMLLHVSSVARAKPRALIVGDMPFLSYEVSIEEAVRNAGLMLKSGAEAVKIEGGSEMVDVIKALVRAGIPVMGHIGLTPQRYLLLGGYRRRGVKEYEAEKIIEDAKELEKAGVFSIVIEFTAADIAEEITKEVSVPTICIGSGPYCDGQVLVLHDLLGIYEEIPPFAKKYADLRRIVIDSVKKYAEEVRNGVFPERKHYFFSKRREAEK</sequence>
<dbReference type="EC" id="2.1.2.11" evidence="1"/>
<dbReference type="EMBL" id="CP000575">
    <property type="protein sequence ID" value="ABN70472.1"/>
    <property type="molecule type" value="Genomic_DNA"/>
</dbReference>
<dbReference type="RefSeq" id="WP_011839666.1">
    <property type="nucleotide sequence ID" value="NC_009033.1"/>
</dbReference>
<dbReference type="SMR" id="A3DPB2"/>
<dbReference type="STRING" id="399550.Smar_1381"/>
<dbReference type="GeneID" id="4907082"/>
<dbReference type="KEGG" id="smr:Smar_1381"/>
<dbReference type="eggNOG" id="arCOG00584">
    <property type="taxonomic scope" value="Archaea"/>
</dbReference>
<dbReference type="HOGENOM" id="CLU_036645_1_0_2"/>
<dbReference type="OrthoDB" id="8414at2157"/>
<dbReference type="UniPathway" id="UPA00241"/>
<dbReference type="Proteomes" id="UP000000254">
    <property type="component" value="Chromosome"/>
</dbReference>
<dbReference type="GO" id="GO:0005737">
    <property type="term" value="C:cytoplasm"/>
    <property type="evidence" value="ECO:0007669"/>
    <property type="project" value="UniProtKB-SubCell"/>
</dbReference>
<dbReference type="GO" id="GO:0003864">
    <property type="term" value="F:3-methyl-2-oxobutanoate hydroxymethyltransferase activity"/>
    <property type="evidence" value="ECO:0007669"/>
    <property type="project" value="UniProtKB-UniRule"/>
</dbReference>
<dbReference type="GO" id="GO:0000287">
    <property type="term" value="F:magnesium ion binding"/>
    <property type="evidence" value="ECO:0007669"/>
    <property type="project" value="TreeGrafter"/>
</dbReference>
<dbReference type="GO" id="GO:0015937">
    <property type="term" value="P:coenzyme A biosynthetic process"/>
    <property type="evidence" value="ECO:0007669"/>
    <property type="project" value="UniProtKB-UniRule"/>
</dbReference>
<dbReference type="GO" id="GO:0015940">
    <property type="term" value="P:pantothenate biosynthetic process"/>
    <property type="evidence" value="ECO:0007669"/>
    <property type="project" value="InterPro"/>
</dbReference>
<dbReference type="CDD" id="cd06557">
    <property type="entry name" value="KPHMT-like"/>
    <property type="match status" value="1"/>
</dbReference>
<dbReference type="FunFam" id="3.20.20.60:FF:000003">
    <property type="entry name" value="3-methyl-2-oxobutanoate hydroxymethyltransferase"/>
    <property type="match status" value="1"/>
</dbReference>
<dbReference type="Gene3D" id="3.20.20.60">
    <property type="entry name" value="Phosphoenolpyruvate-binding domains"/>
    <property type="match status" value="1"/>
</dbReference>
<dbReference type="HAMAP" id="MF_00156">
    <property type="entry name" value="PanB"/>
    <property type="match status" value="1"/>
</dbReference>
<dbReference type="InterPro" id="IPR003700">
    <property type="entry name" value="Pantoate_hydroxy_MeTrfase"/>
</dbReference>
<dbReference type="InterPro" id="IPR015813">
    <property type="entry name" value="Pyrv/PenolPyrv_kinase-like_dom"/>
</dbReference>
<dbReference type="InterPro" id="IPR040442">
    <property type="entry name" value="Pyrv_kinase-like_dom_sf"/>
</dbReference>
<dbReference type="NCBIfam" id="TIGR00222">
    <property type="entry name" value="panB"/>
    <property type="match status" value="1"/>
</dbReference>
<dbReference type="NCBIfam" id="NF001452">
    <property type="entry name" value="PRK00311.1"/>
    <property type="match status" value="1"/>
</dbReference>
<dbReference type="PANTHER" id="PTHR20881">
    <property type="entry name" value="3-METHYL-2-OXOBUTANOATE HYDROXYMETHYLTRANSFERASE"/>
    <property type="match status" value="1"/>
</dbReference>
<dbReference type="PANTHER" id="PTHR20881:SF0">
    <property type="entry name" value="3-METHYL-2-OXOBUTANOATE HYDROXYMETHYLTRANSFERASE"/>
    <property type="match status" value="1"/>
</dbReference>
<dbReference type="Pfam" id="PF02548">
    <property type="entry name" value="Pantoate_transf"/>
    <property type="match status" value="1"/>
</dbReference>
<dbReference type="PIRSF" id="PIRSF000388">
    <property type="entry name" value="Pantoate_hydroxy_MeTrfase"/>
    <property type="match status" value="1"/>
</dbReference>
<dbReference type="SUPFAM" id="SSF51621">
    <property type="entry name" value="Phosphoenolpyruvate/pyruvate domain"/>
    <property type="match status" value="1"/>
</dbReference>
<keyword id="KW-0173">Coenzyme A biosynthesis</keyword>
<keyword id="KW-0963">Cytoplasm</keyword>
<keyword id="KW-0460">Magnesium</keyword>
<keyword id="KW-0479">Metal-binding</keyword>
<keyword id="KW-1185">Reference proteome</keyword>
<keyword id="KW-0808">Transferase</keyword>
<feature type="chain" id="PRO_0000297427" description="3-methyl-2-oxobutanoate hydroxymethyltransferase">
    <location>
        <begin position="1"/>
        <end position="271"/>
    </location>
</feature>
<feature type="active site" description="Proton acceptor" evidence="1">
    <location>
        <position position="181"/>
    </location>
</feature>
<feature type="binding site" evidence="1">
    <location>
        <begin position="44"/>
        <end position="45"/>
    </location>
    <ligand>
        <name>3-methyl-2-oxobutanoate</name>
        <dbReference type="ChEBI" id="CHEBI:11851"/>
    </ligand>
</feature>
<feature type="binding site" evidence="1">
    <location>
        <position position="44"/>
    </location>
    <ligand>
        <name>Mg(2+)</name>
        <dbReference type="ChEBI" id="CHEBI:18420"/>
    </ligand>
</feature>
<feature type="binding site" evidence="1">
    <location>
        <position position="83"/>
    </location>
    <ligand>
        <name>3-methyl-2-oxobutanoate</name>
        <dbReference type="ChEBI" id="CHEBI:11851"/>
    </ligand>
</feature>
<feature type="binding site" evidence="1">
    <location>
        <position position="83"/>
    </location>
    <ligand>
        <name>Mg(2+)</name>
        <dbReference type="ChEBI" id="CHEBI:18420"/>
    </ligand>
</feature>
<feature type="binding site" evidence="1">
    <location>
        <position position="112"/>
    </location>
    <ligand>
        <name>3-methyl-2-oxobutanoate</name>
        <dbReference type="ChEBI" id="CHEBI:11851"/>
    </ligand>
</feature>
<feature type="binding site" evidence="1">
    <location>
        <position position="114"/>
    </location>
    <ligand>
        <name>Mg(2+)</name>
        <dbReference type="ChEBI" id="CHEBI:18420"/>
    </ligand>
</feature>